<organism>
    <name type="scientific">Pseudomonas denitrificans</name>
    <dbReference type="NCBI Taxonomy" id="43306"/>
    <lineage>
        <taxon>Bacteria</taxon>
        <taxon>Pseudomonadati</taxon>
        <taxon>Pseudomonadota</taxon>
        <taxon>Gammaproteobacteria</taxon>
        <taxon>Pseudomonadales</taxon>
        <taxon>Pseudomonadaceae</taxon>
        <taxon>Halopseudomonas</taxon>
    </lineage>
</organism>
<sequence length="82" mass="8573">STGEELFKAKACVACHSVDKKLVGPAFHDVAAKYGAQGDGVAHITNSIKTGSKGNWGPIPMPPNAVSPEEAKTLAEWIVTLK</sequence>
<comment type="function">
    <text>This is a prokaryotic monoheme cytochrome, unreactive with mitochondrial cytochrome C oxidase or reductase. It functions in nitrite and nitrate respiration in Pseudomonas, but it is also found in other bacteria.</text>
</comment>
<comment type="PTM">
    <text>Binds 1 heme c group covalently per subunit.</text>
</comment>
<accession>P00103</accession>
<dbReference type="SMR" id="P00103"/>
<dbReference type="GO" id="GO:0009055">
    <property type="term" value="F:electron transfer activity"/>
    <property type="evidence" value="ECO:0007669"/>
    <property type="project" value="InterPro"/>
</dbReference>
<dbReference type="GO" id="GO:0020037">
    <property type="term" value="F:heme binding"/>
    <property type="evidence" value="ECO:0007669"/>
    <property type="project" value="InterPro"/>
</dbReference>
<dbReference type="GO" id="GO:0005506">
    <property type="term" value="F:iron ion binding"/>
    <property type="evidence" value="ECO:0007669"/>
    <property type="project" value="InterPro"/>
</dbReference>
<dbReference type="Gene3D" id="1.10.760.10">
    <property type="entry name" value="Cytochrome c-like domain"/>
    <property type="match status" value="1"/>
</dbReference>
<dbReference type="InterPro" id="IPR009056">
    <property type="entry name" value="Cyt_c-like_dom"/>
</dbReference>
<dbReference type="InterPro" id="IPR036909">
    <property type="entry name" value="Cyt_c-like_dom_sf"/>
</dbReference>
<dbReference type="InterPro" id="IPR002324">
    <property type="entry name" value="Cyt_c_ID"/>
</dbReference>
<dbReference type="Pfam" id="PF00034">
    <property type="entry name" value="Cytochrom_C"/>
    <property type="match status" value="1"/>
</dbReference>
<dbReference type="PRINTS" id="PR00606">
    <property type="entry name" value="CYTCHROMECID"/>
</dbReference>
<dbReference type="SUPFAM" id="SSF46626">
    <property type="entry name" value="Cytochrome c"/>
    <property type="match status" value="1"/>
</dbReference>
<dbReference type="PROSITE" id="PS51007">
    <property type="entry name" value="CYTC"/>
    <property type="match status" value="1"/>
</dbReference>
<protein>
    <recommendedName>
        <fullName>Cytochrome c-551</fullName>
    </recommendedName>
    <alternativeName>
        <fullName>Cytochrome C8</fullName>
    </alternativeName>
    <alternativeName>
        <fullName>Cytochrome c551</fullName>
    </alternativeName>
</protein>
<feature type="chain" id="PRO_0000108395" description="Cytochrome c-551">
    <location>
        <begin position="1"/>
        <end position="82"/>
    </location>
</feature>
<feature type="binding site" description="covalent">
    <location>
        <position position="12"/>
    </location>
    <ligand>
        <name>heme c</name>
        <dbReference type="ChEBI" id="CHEBI:61717"/>
    </ligand>
</feature>
<feature type="binding site" description="covalent">
    <location>
        <position position="15"/>
    </location>
    <ligand>
        <name>heme c</name>
        <dbReference type="ChEBI" id="CHEBI:61717"/>
    </ligand>
</feature>
<feature type="binding site" description="axial binding residue">
    <location>
        <position position="16"/>
    </location>
    <ligand>
        <name>heme c</name>
        <dbReference type="ChEBI" id="CHEBI:61717"/>
    </ligand>
    <ligandPart>
        <name>Fe</name>
        <dbReference type="ChEBI" id="CHEBI:18248"/>
    </ligandPart>
</feature>
<feature type="binding site" description="axial binding residue">
    <location>
        <position position="61"/>
    </location>
    <ligand>
        <name>heme c</name>
        <dbReference type="ChEBI" id="CHEBI:61717"/>
    </ligand>
    <ligandPart>
        <name>Fe</name>
        <dbReference type="ChEBI" id="CHEBI:18248"/>
    </ligandPart>
</feature>
<keyword id="KW-0903">Direct protein sequencing</keyword>
<keyword id="KW-0249">Electron transport</keyword>
<keyword id="KW-0349">Heme</keyword>
<keyword id="KW-0408">Iron</keyword>
<keyword id="KW-0479">Metal-binding</keyword>
<keyword id="KW-0813">Transport</keyword>
<proteinExistence type="evidence at protein level"/>
<name>CY551_PSEDE</name>
<reference key="1">
    <citation type="journal article" date="1973" name="Syst. Zool.">
        <title>Bacterial cytochromes C and molecular evolution.</title>
        <authorList>
            <person name="Ambler R.P."/>
        </authorList>
    </citation>
    <scope>PROTEIN SEQUENCE</scope>
    <source>
        <strain>ATCC 13867 / DSM 1650 / CIP 104375 / JCM 20650 / NBRC 13302 / NCIMB 9496 / 926</strain>
    </source>
</reference>